<proteinExistence type="inferred from homology"/>
<name>RL27_BACP2</name>
<accession>A8FFT0</accession>
<sequence length="94" mass="10360">MLRLDLQFFASKKGVGSTKNGRDSESKRLGAKRADGQFVTGGSILYRQRGTKIYPGENVGRGGDDTLFAKIDGTVKFERFGRDRKKVSVYPAAQ</sequence>
<comment type="PTM">
    <text evidence="1">The N-terminus is cleaved by ribosomal processing cysteine protease Prp.</text>
</comment>
<comment type="similarity">
    <text evidence="2">Belongs to the bacterial ribosomal protein bL27 family.</text>
</comment>
<protein>
    <recommendedName>
        <fullName evidence="2">Large ribosomal subunit protein bL27</fullName>
    </recommendedName>
    <alternativeName>
        <fullName evidence="3">50S ribosomal protein L27</fullName>
    </alternativeName>
</protein>
<keyword id="KW-0687">Ribonucleoprotein</keyword>
<keyword id="KW-0689">Ribosomal protein</keyword>
<evidence type="ECO:0000250" key="1">
    <source>
        <dbReference type="UniProtKB" id="Q2FXT0"/>
    </source>
</evidence>
<evidence type="ECO:0000255" key="2">
    <source>
        <dbReference type="HAMAP-Rule" id="MF_00539"/>
    </source>
</evidence>
<evidence type="ECO:0000305" key="3"/>
<dbReference type="EMBL" id="CP000813">
    <property type="protein sequence ID" value="ABV63097.1"/>
    <property type="molecule type" value="Genomic_DNA"/>
</dbReference>
<dbReference type="RefSeq" id="WP_003216586.1">
    <property type="nucleotide sequence ID" value="NZ_VEIS01000010.1"/>
</dbReference>
<dbReference type="SMR" id="A8FFT0"/>
<dbReference type="STRING" id="315750.BPUM_2434"/>
<dbReference type="GeneID" id="66364009"/>
<dbReference type="KEGG" id="bpu:BPUM_2434"/>
<dbReference type="eggNOG" id="COG0211">
    <property type="taxonomic scope" value="Bacteria"/>
</dbReference>
<dbReference type="HOGENOM" id="CLU_095424_4_0_9"/>
<dbReference type="OrthoDB" id="9803474at2"/>
<dbReference type="Proteomes" id="UP000001355">
    <property type="component" value="Chromosome"/>
</dbReference>
<dbReference type="GO" id="GO:0022625">
    <property type="term" value="C:cytosolic large ribosomal subunit"/>
    <property type="evidence" value="ECO:0007669"/>
    <property type="project" value="TreeGrafter"/>
</dbReference>
<dbReference type="GO" id="GO:0003735">
    <property type="term" value="F:structural constituent of ribosome"/>
    <property type="evidence" value="ECO:0007669"/>
    <property type="project" value="InterPro"/>
</dbReference>
<dbReference type="GO" id="GO:0006412">
    <property type="term" value="P:translation"/>
    <property type="evidence" value="ECO:0007669"/>
    <property type="project" value="UniProtKB-UniRule"/>
</dbReference>
<dbReference type="FunFam" id="2.40.50.100:FF:000004">
    <property type="entry name" value="50S ribosomal protein L27"/>
    <property type="match status" value="1"/>
</dbReference>
<dbReference type="Gene3D" id="2.40.50.100">
    <property type="match status" value="1"/>
</dbReference>
<dbReference type="HAMAP" id="MF_00539">
    <property type="entry name" value="Ribosomal_bL27"/>
    <property type="match status" value="1"/>
</dbReference>
<dbReference type="InterPro" id="IPR001684">
    <property type="entry name" value="Ribosomal_bL27"/>
</dbReference>
<dbReference type="InterPro" id="IPR018261">
    <property type="entry name" value="Ribosomal_bL27_CS"/>
</dbReference>
<dbReference type="NCBIfam" id="TIGR00062">
    <property type="entry name" value="L27"/>
    <property type="match status" value="1"/>
</dbReference>
<dbReference type="PANTHER" id="PTHR15893:SF0">
    <property type="entry name" value="LARGE RIBOSOMAL SUBUNIT PROTEIN BL27M"/>
    <property type="match status" value="1"/>
</dbReference>
<dbReference type="PANTHER" id="PTHR15893">
    <property type="entry name" value="RIBOSOMAL PROTEIN L27"/>
    <property type="match status" value="1"/>
</dbReference>
<dbReference type="Pfam" id="PF01016">
    <property type="entry name" value="Ribosomal_L27"/>
    <property type="match status" value="1"/>
</dbReference>
<dbReference type="PRINTS" id="PR00063">
    <property type="entry name" value="RIBOSOMALL27"/>
</dbReference>
<dbReference type="SUPFAM" id="SSF110324">
    <property type="entry name" value="Ribosomal L27 protein-like"/>
    <property type="match status" value="1"/>
</dbReference>
<dbReference type="PROSITE" id="PS00831">
    <property type="entry name" value="RIBOSOMAL_L27"/>
    <property type="match status" value="1"/>
</dbReference>
<gene>
    <name evidence="2" type="primary">rpmA</name>
    <name type="ordered locus">BPUM_2434</name>
</gene>
<organism>
    <name type="scientific">Bacillus pumilus (strain SAFR-032)</name>
    <dbReference type="NCBI Taxonomy" id="315750"/>
    <lineage>
        <taxon>Bacteria</taxon>
        <taxon>Bacillati</taxon>
        <taxon>Bacillota</taxon>
        <taxon>Bacilli</taxon>
        <taxon>Bacillales</taxon>
        <taxon>Bacillaceae</taxon>
        <taxon>Bacillus</taxon>
    </lineage>
</organism>
<reference key="1">
    <citation type="journal article" date="2007" name="PLoS ONE">
        <title>Paradoxical DNA repair and peroxide resistance gene conservation in Bacillus pumilus SAFR-032.</title>
        <authorList>
            <person name="Gioia J."/>
            <person name="Yerrapragada S."/>
            <person name="Qin X."/>
            <person name="Jiang H."/>
            <person name="Igboeli O.C."/>
            <person name="Muzny D."/>
            <person name="Dugan-Rocha S."/>
            <person name="Ding Y."/>
            <person name="Hawes A."/>
            <person name="Liu W."/>
            <person name="Perez L."/>
            <person name="Kovar C."/>
            <person name="Dinh H."/>
            <person name="Lee S."/>
            <person name="Nazareth L."/>
            <person name="Blyth P."/>
            <person name="Holder M."/>
            <person name="Buhay C."/>
            <person name="Tirumalai M.R."/>
            <person name="Liu Y."/>
            <person name="Dasgupta I."/>
            <person name="Bokhetache L."/>
            <person name="Fujita M."/>
            <person name="Karouia F."/>
            <person name="Eswara Moorthy P."/>
            <person name="Siefert J."/>
            <person name="Uzman A."/>
            <person name="Buzumbo P."/>
            <person name="Verma A."/>
            <person name="Zwiya H."/>
            <person name="McWilliams B.D."/>
            <person name="Olowu A."/>
            <person name="Clinkenbeard K.D."/>
            <person name="Newcombe D."/>
            <person name="Golebiewski L."/>
            <person name="Petrosino J.F."/>
            <person name="Nicholson W.L."/>
            <person name="Fox G.E."/>
            <person name="Venkateswaran K."/>
            <person name="Highlander S.K."/>
            <person name="Weinstock G.M."/>
        </authorList>
    </citation>
    <scope>NUCLEOTIDE SEQUENCE [LARGE SCALE GENOMIC DNA]</scope>
    <source>
        <strain>SAFR-032</strain>
    </source>
</reference>
<feature type="propeptide" id="PRO_0000459863" evidence="1">
    <location>
        <begin position="1"/>
        <end position="9"/>
    </location>
</feature>
<feature type="chain" id="PRO_1000061043" description="Large ribosomal subunit protein bL27">
    <location>
        <begin position="10"/>
        <end position="94"/>
    </location>
</feature>